<gene>
    <name type="primary">glgX</name>
    <name type="synonym">treX</name>
    <name type="ordered locus">MT1615</name>
</gene>
<sequence length="721" mass="81081">MSSNNAGESDGTGPALPTVWPGNAYPLGATYDGAGTNFSLFSEIAEKVELCLIDEDGVESRIPLDEVDGYVWHAYLPNITPGQRYGFRVHGPFDPAAGHRCDPSKLLLDPYGKSFHGDFTFGQALYSYDVNAVDPDSTPPMVDSLGHTMTSVVINPFFDWAYDRSPRTPYHETVIYEAHVKGMTQTHPSIPPELRGTYAGLAHPVIIDHLNELNVTAVELMPVHQFLHDSRLLDLGLRNYWGYNTFGFFAPHHQYASTRQAGSAVAEFKTMVRSLHEAGIEVILDVVYNHTAEGNHLGPTINFRGIDNTAYYRLMDHDLRFYKDFTGTGNSLNARHPHTLQLIMDSLRYWVIEMHVDGFRFDLASTLARELHDVDRLSAFFDLVQQDPVVSQVKLIAEPWDVGEGGYQVGNFPGLWTEWNGKYRDTVRDYWRGEPATLGEFASRLTGSSDLYEATGRRPSASINFVTAHDGFTLNDLVSYNDKHNEANGENNRDGESYNRSWNCGVEGPTDDPDILALRARQMRNMWATLMVSQGTPMIAHGDEIGRTQYGNNNVYCQDSELSWMDWSLVDKNADLLAFARKATTLRKNHKVFRRRRFFEGEPIRSGDEVRDIAWLTPSGREMTHEDWGRGFDRCVAVFLNGEAITAPDARGERVVDDSFLLCFNAHDHDVEFVMPHDGYAQQWTGELDTNDPVGDIDLTVTATDTFSVPARSLLVLRKTL</sequence>
<evidence type="ECO:0000250" key="1"/>
<evidence type="ECO:0000305" key="2"/>
<name>GLGX_MYCTO</name>
<comment type="similarity">
    <text evidence="2">Belongs to the glycosyl hydrolase 13 family.</text>
</comment>
<organism>
    <name type="scientific">Mycobacterium tuberculosis (strain CDC 1551 / Oshkosh)</name>
    <dbReference type="NCBI Taxonomy" id="83331"/>
    <lineage>
        <taxon>Bacteria</taxon>
        <taxon>Bacillati</taxon>
        <taxon>Actinomycetota</taxon>
        <taxon>Actinomycetes</taxon>
        <taxon>Mycobacteriales</taxon>
        <taxon>Mycobacteriaceae</taxon>
        <taxon>Mycobacterium</taxon>
        <taxon>Mycobacterium tuberculosis complex</taxon>
    </lineage>
</organism>
<dbReference type="EC" id="3.2.1.-"/>
<dbReference type="EMBL" id="AE000516">
    <property type="protein sequence ID" value="AAK45882.1"/>
    <property type="molecule type" value="Genomic_DNA"/>
</dbReference>
<dbReference type="PIR" id="A70764">
    <property type="entry name" value="A70764"/>
</dbReference>
<dbReference type="RefSeq" id="WP_003898930.1">
    <property type="nucleotide sequence ID" value="NZ_KK341227.1"/>
</dbReference>
<dbReference type="SMR" id="P9WQ24"/>
<dbReference type="CAZy" id="CBM48">
    <property type="family name" value="Carbohydrate-Binding Module Family 48"/>
</dbReference>
<dbReference type="CAZy" id="GH13">
    <property type="family name" value="Glycoside Hydrolase Family 13"/>
</dbReference>
<dbReference type="KEGG" id="mtc:MT1615"/>
<dbReference type="PATRIC" id="fig|83331.31.peg.1737"/>
<dbReference type="HOGENOM" id="CLU_011725_1_1_11"/>
<dbReference type="Proteomes" id="UP000001020">
    <property type="component" value="Chromosome"/>
</dbReference>
<dbReference type="GO" id="GO:0004133">
    <property type="term" value="F:glycogen debranching enzyme activity"/>
    <property type="evidence" value="ECO:0007669"/>
    <property type="project" value="InterPro"/>
</dbReference>
<dbReference type="GO" id="GO:0004553">
    <property type="term" value="F:hydrolase activity, hydrolyzing O-glycosyl compounds"/>
    <property type="evidence" value="ECO:0007669"/>
    <property type="project" value="InterPro"/>
</dbReference>
<dbReference type="GO" id="GO:0005980">
    <property type="term" value="P:glycogen catabolic process"/>
    <property type="evidence" value="ECO:0007669"/>
    <property type="project" value="InterPro"/>
</dbReference>
<dbReference type="CDD" id="cd11326">
    <property type="entry name" value="AmyAc_Glg_debranch"/>
    <property type="match status" value="1"/>
</dbReference>
<dbReference type="CDD" id="cd02856">
    <property type="entry name" value="E_set_GDE_Isoamylase_N"/>
    <property type="match status" value="1"/>
</dbReference>
<dbReference type="Gene3D" id="3.20.20.80">
    <property type="entry name" value="Glycosidases"/>
    <property type="match status" value="1"/>
</dbReference>
<dbReference type="Gene3D" id="2.60.40.1180">
    <property type="entry name" value="Golgi alpha-mannosidase II"/>
    <property type="match status" value="1"/>
</dbReference>
<dbReference type="Gene3D" id="2.60.40.10">
    <property type="entry name" value="Immunoglobulins"/>
    <property type="match status" value="1"/>
</dbReference>
<dbReference type="InterPro" id="IPR044505">
    <property type="entry name" value="GlgX_Isoamylase_N_E_set"/>
</dbReference>
<dbReference type="InterPro" id="IPR006047">
    <property type="entry name" value="Glyco_hydro_13_cat_dom"/>
</dbReference>
<dbReference type="InterPro" id="IPR004193">
    <property type="entry name" value="Glyco_hydro_13_N"/>
</dbReference>
<dbReference type="InterPro" id="IPR013780">
    <property type="entry name" value="Glyco_hydro_b"/>
</dbReference>
<dbReference type="InterPro" id="IPR011837">
    <property type="entry name" value="Glycogen_debranch_GlgX"/>
</dbReference>
<dbReference type="InterPro" id="IPR017853">
    <property type="entry name" value="Glycoside_hydrolase_SF"/>
</dbReference>
<dbReference type="InterPro" id="IPR013783">
    <property type="entry name" value="Ig-like_fold"/>
</dbReference>
<dbReference type="InterPro" id="IPR014756">
    <property type="entry name" value="Ig_E-set"/>
</dbReference>
<dbReference type="NCBIfam" id="TIGR02100">
    <property type="entry name" value="glgX_debranch"/>
    <property type="match status" value="1"/>
</dbReference>
<dbReference type="PANTHER" id="PTHR43002">
    <property type="entry name" value="GLYCOGEN DEBRANCHING ENZYME"/>
    <property type="match status" value="1"/>
</dbReference>
<dbReference type="Pfam" id="PF00128">
    <property type="entry name" value="Alpha-amylase"/>
    <property type="match status" value="1"/>
</dbReference>
<dbReference type="Pfam" id="PF02922">
    <property type="entry name" value="CBM_48"/>
    <property type="match status" value="1"/>
</dbReference>
<dbReference type="SMART" id="SM00642">
    <property type="entry name" value="Aamy"/>
    <property type="match status" value="1"/>
</dbReference>
<dbReference type="SUPFAM" id="SSF51445">
    <property type="entry name" value="(Trans)glycosidases"/>
    <property type="match status" value="1"/>
</dbReference>
<dbReference type="SUPFAM" id="SSF81296">
    <property type="entry name" value="E set domains"/>
    <property type="match status" value="1"/>
</dbReference>
<dbReference type="SUPFAM" id="SSF51011">
    <property type="entry name" value="Glycosyl hydrolase domain"/>
    <property type="match status" value="1"/>
</dbReference>
<keyword id="KW-0326">Glycosidase</keyword>
<keyword id="KW-0378">Hydrolase</keyword>
<keyword id="KW-1185">Reference proteome</keyword>
<accession>P9WQ24</accession>
<accession>L0T9Z7</accession>
<accession>P0A4Y4</accession>
<accession>Q10767</accession>
<protein>
    <recommendedName>
        <fullName>Glycogen operon protein GlgX homolog</fullName>
        <ecNumber>3.2.1.-</ecNumber>
    </recommendedName>
</protein>
<feature type="chain" id="PRO_0000426850" description="Glycogen operon protein GlgX homolog">
    <location>
        <begin position="1"/>
        <end position="721"/>
    </location>
</feature>
<feature type="active site" description="Nucleophile" evidence="1">
    <location>
        <position position="362"/>
    </location>
</feature>
<feature type="active site" description="Proton donor" evidence="1">
    <location>
        <position position="398"/>
    </location>
</feature>
<feature type="site" description="Transition state stabilizer" evidence="1">
    <location>
        <position position="470"/>
    </location>
</feature>
<proteinExistence type="inferred from homology"/>
<reference key="1">
    <citation type="journal article" date="2002" name="J. Bacteriol.">
        <title>Whole-genome comparison of Mycobacterium tuberculosis clinical and laboratory strains.</title>
        <authorList>
            <person name="Fleischmann R.D."/>
            <person name="Alland D."/>
            <person name="Eisen J.A."/>
            <person name="Carpenter L."/>
            <person name="White O."/>
            <person name="Peterson J.D."/>
            <person name="DeBoy R.T."/>
            <person name="Dodson R.J."/>
            <person name="Gwinn M.L."/>
            <person name="Haft D.H."/>
            <person name="Hickey E.K."/>
            <person name="Kolonay J.F."/>
            <person name="Nelson W.C."/>
            <person name="Umayam L.A."/>
            <person name="Ermolaeva M.D."/>
            <person name="Salzberg S.L."/>
            <person name="Delcher A."/>
            <person name="Utterback T.R."/>
            <person name="Weidman J.F."/>
            <person name="Khouri H.M."/>
            <person name="Gill J."/>
            <person name="Mikula A."/>
            <person name="Bishai W."/>
            <person name="Jacobs W.R. Jr."/>
            <person name="Venter J.C."/>
            <person name="Fraser C.M."/>
        </authorList>
    </citation>
    <scope>NUCLEOTIDE SEQUENCE [LARGE SCALE GENOMIC DNA]</scope>
    <source>
        <strain>CDC 1551 / Oshkosh</strain>
    </source>
</reference>